<sequence>MPRRREVPKREVLPDPKFGNVDVAKFMNMLMLSGKKSVAERIVYGAFEQIQTKGGKDPLEVFTVALNNVKPVVEVKSRRVGGANYQVPVEVRPSRRMALAMRWLREAAKKRSEKSMALRLAGELSEAAEGRGGAMKKRDEVHRMAEANRAFSHFRF</sequence>
<reference key="1">
    <citation type="submission" date="2008-04" db="EMBL/GenBank/DDBJ databases">
        <title>Complete sequence of chromosome 1 of Burkholderia ambifaria MC40-6.</title>
        <authorList>
            <person name="Copeland A."/>
            <person name="Lucas S."/>
            <person name="Lapidus A."/>
            <person name="Glavina del Rio T."/>
            <person name="Dalin E."/>
            <person name="Tice H."/>
            <person name="Pitluck S."/>
            <person name="Chain P."/>
            <person name="Malfatti S."/>
            <person name="Shin M."/>
            <person name="Vergez L."/>
            <person name="Lang D."/>
            <person name="Schmutz J."/>
            <person name="Larimer F."/>
            <person name="Land M."/>
            <person name="Hauser L."/>
            <person name="Kyrpides N."/>
            <person name="Lykidis A."/>
            <person name="Ramette A."/>
            <person name="Konstantinidis K."/>
            <person name="Tiedje J."/>
            <person name="Richardson P."/>
        </authorList>
    </citation>
    <scope>NUCLEOTIDE SEQUENCE [LARGE SCALE GENOMIC DNA]</scope>
    <source>
        <strain>MC40-6</strain>
    </source>
</reference>
<keyword id="KW-0687">Ribonucleoprotein</keyword>
<keyword id="KW-0689">Ribosomal protein</keyword>
<keyword id="KW-0694">RNA-binding</keyword>
<keyword id="KW-0699">rRNA-binding</keyword>
<keyword id="KW-0820">tRNA-binding</keyword>
<dbReference type="EMBL" id="CP001025">
    <property type="protein sequence ID" value="ACB62773.1"/>
    <property type="molecule type" value="Genomic_DNA"/>
</dbReference>
<dbReference type="RefSeq" id="WP_006477195.1">
    <property type="nucleotide sequence ID" value="NC_010551.1"/>
</dbReference>
<dbReference type="SMR" id="B1YRC6"/>
<dbReference type="GeneID" id="93193455"/>
<dbReference type="KEGG" id="bac:BamMC406_0272"/>
<dbReference type="HOGENOM" id="CLU_072226_1_1_4"/>
<dbReference type="OrthoDB" id="9807653at2"/>
<dbReference type="Proteomes" id="UP000001680">
    <property type="component" value="Chromosome 1"/>
</dbReference>
<dbReference type="GO" id="GO:0015935">
    <property type="term" value="C:small ribosomal subunit"/>
    <property type="evidence" value="ECO:0007669"/>
    <property type="project" value="InterPro"/>
</dbReference>
<dbReference type="GO" id="GO:0019843">
    <property type="term" value="F:rRNA binding"/>
    <property type="evidence" value="ECO:0007669"/>
    <property type="project" value="UniProtKB-UniRule"/>
</dbReference>
<dbReference type="GO" id="GO:0003735">
    <property type="term" value="F:structural constituent of ribosome"/>
    <property type="evidence" value="ECO:0007669"/>
    <property type="project" value="InterPro"/>
</dbReference>
<dbReference type="GO" id="GO:0000049">
    <property type="term" value="F:tRNA binding"/>
    <property type="evidence" value="ECO:0007669"/>
    <property type="project" value="UniProtKB-UniRule"/>
</dbReference>
<dbReference type="GO" id="GO:0006412">
    <property type="term" value="P:translation"/>
    <property type="evidence" value="ECO:0007669"/>
    <property type="project" value="UniProtKB-UniRule"/>
</dbReference>
<dbReference type="CDD" id="cd14869">
    <property type="entry name" value="uS7_Bacteria"/>
    <property type="match status" value="1"/>
</dbReference>
<dbReference type="FunFam" id="1.10.455.10:FF:000001">
    <property type="entry name" value="30S ribosomal protein S7"/>
    <property type="match status" value="1"/>
</dbReference>
<dbReference type="Gene3D" id="1.10.455.10">
    <property type="entry name" value="Ribosomal protein S7 domain"/>
    <property type="match status" value="1"/>
</dbReference>
<dbReference type="HAMAP" id="MF_00480_B">
    <property type="entry name" value="Ribosomal_uS7_B"/>
    <property type="match status" value="1"/>
</dbReference>
<dbReference type="InterPro" id="IPR000235">
    <property type="entry name" value="Ribosomal_uS7"/>
</dbReference>
<dbReference type="InterPro" id="IPR005717">
    <property type="entry name" value="Ribosomal_uS7_bac/org-type"/>
</dbReference>
<dbReference type="InterPro" id="IPR020606">
    <property type="entry name" value="Ribosomal_uS7_CS"/>
</dbReference>
<dbReference type="InterPro" id="IPR023798">
    <property type="entry name" value="Ribosomal_uS7_dom"/>
</dbReference>
<dbReference type="InterPro" id="IPR036823">
    <property type="entry name" value="Ribosomal_uS7_dom_sf"/>
</dbReference>
<dbReference type="NCBIfam" id="TIGR01029">
    <property type="entry name" value="rpsG_bact"/>
    <property type="match status" value="1"/>
</dbReference>
<dbReference type="PANTHER" id="PTHR11205">
    <property type="entry name" value="RIBOSOMAL PROTEIN S7"/>
    <property type="match status" value="1"/>
</dbReference>
<dbReference type="Pfam" id="PF00177">
    <property type="entry name" value="Ribosomal_S7"/>
    <property type="match status" value="1"/>
</dbReference>
<dbReference type="PIRSF" id="PIRSF002122">
    <property type="entry name" value="RPS7p_RPS7a_RPS5e_RPS7o"/>
    <property type="match status" value="1"/>
</dbReference>
<dbReference type="SUPFAM" id="SSF47973">
    <property type="entry name" value="Ribosomal protein S7"/>
    <property type="match status" value="1"/>
</dbReference>
<dbReference type="PROSITE" id="PS00052">
    <property type="entry name" value="RIBOSOMAL_S7"/>
    <property type="match status" value="1"/>
</dbReference>
<feature type="chain" id="PRO_1000125905" description="Small ribosomal subunit protein uS7">
    <location>
        <begin position="1"/>
        <end position="156"/>
    </location>
</feature>
<comment type="function">
    <text evidence="1">One of the primary rRNA binding proteins, it binds directly to 16S rRNA where it nucleates assembly of the head domain of the 30S subunit. Is located at the subunit interface close to the decoding center, probably blocks exit of the E-site tRNA.</text>
</comment>
<comment type="subunit">
    <text evidence="1">Part of the 30S ribosomal subunit. Contacts proteins S9 and S11.</text>
</comment>
<comment type="similarity">
    <text evidence="1">Belongs to the universal ribosomal protein uS7 family.</text>
</comment>
<gene>
    <name evidence="1" type="primary">rpsG</name>
    <name type="ordered locus">BamMC406_0272</name>
</gene>
<protein>
    <recommendedName>
        <fullName evidence="1">Small ribosomal subunit protein uS7</fullName>
    </recommendedName>
    <alternativeName>
        <fullName evidence="2">30S ribosomal protein S7</fullName>
    </alternativeName>
</protein>
<accession>B1YRC6</accession>
<name>RS7_BURA4</name>
<organism>
    <name type="scientific">Burkholderia ambifaria (strain MC40-6)</name>
    <dbReference type="NCBI Taxonomy" id="398577"/>
    <lineage>
        <taxon>Bacteria</taxon>
        <taxon>Pseudomonadati</taxon>
        <taxon>Pseudomonadota</taxon>
        <taxon>Betaproteobacteria</taxon>
        <taxon>Burkholderiales</taxon>
        <taxon>Burkholderiaceae</taxon>
        <taxon>Burkholderia</taxon>
        <taxon>Burkholderia cepacia complex</taxon>
    </lineage>
</organism>
<evidence type="ECO:0000255" key="1">
    <source>
        <dbReference type="HAMAP-Rule" id="MF_00480"/>
    </source>
</evidence>
<evidence type="ECO:0000305" key="2"/>
<proteinExistence type="inferred from homology"/>